<sequence length="173" mass="19819">MTGVKIVQVSEKDLPEFIAISRETFADTFGKDNSPEDMAKFLEKTINEDKLGGEIATPGSFFYFLKVDGEVAGYLKLDVDDAQNEEVDPNGLEIERIYLRKSFQHRGLGKQLFEFAEEKGREWSKSVLWLGVWEHNENAKNFYASRGLTRFSEHVFVLGDDRQTDFLLKKALV</sequence>
<organism>
    <name type="scientific">Lactobacillus delbrueckii subsp. lactis</name>
    <dbReference type="NCBI Taxonomy" id="29397"/>
    <lineage>
        <taxon>Bacteria</taxon>
        <taxon>Bacillati</taxon>
        <taxon>Bacillota</taxon>
        <taxon>Bacilli</taxon>
        <taxon>Lactobacillales</taxon>
        <taxon>Lactobacillaceae</taxon>
        <taxon>Lactobacillus</taxon>
    </lineage>
</organism>
<evidence type="ECO:0000250" key="1"/>
<evidence type="ECO:0000255" key="2">
    <source>
        <dbReference type="PROSITE-ProRule" id="PRU00532"/>
    </source>
</evidence>
<keyword id="KW-0012">Acyltransferase</keyword>
<keyword id="KW-0808">Transferase</keyword>
<proteinExistence type="predicted"/>
<accession>P46543</accession>
<name>YPIP_LACDL</name>
<dbReference type="EC" id="2.3.1.-"/>
<dbReference type="EMBL" id="Z26948">
    <property type="protein sequence ID" value="CAA81557.1"/>
    <property type="molecule type" value="Genomic_DNA"/>
</dbReference>
<dbReference type="PIR" id="B59087">
    <property type="entry name" value="S44283"/>
</dbReference>
<dbReference type="SMR" id="P46543"/>
<dbReference type="GO" id="GO:0016747">
    <property type="term" value="F:acyltransferase activity, transferring groups other than amino-acyl groups"/>
    <property type="evidence" value="ECO:0007669"/>
    <property type="project" value="InterPro"/>
</dbReference>
<dbReference type="CDD" id="cd04301">
    <property type="entry name" value="NAT_SF"/>
    <property type="match status" value="1"/>
</dbReference>
<dbReference type="Gene3D" id="3.40.630.30">
    <property type="match status" value="1"/>
</dbReference>
<dbReference type="InterPro" id="IPR016181">
    <property type="entry name" value="Acyl_CoA_acyltransferase"/>
</dbReference>
<dbReference type="InterPro" id="IPR050832">
    <property type="entry name" value="Bact_Acetyltransf"/>
</dbReference>
<dbReference type="InterPro" id="IPR000182">
    <property type="entry name" value="GNAT_dom"/>
</dbReference>
<dbReference type="PANTHER" id="PTHR43877">
    <property type="entry name" value="AMINOALKYLPHOSPHONATE N-ACETYLTRANSFERASE-RELATED-RELATED"/>
    <property type="match status" value="1"/>
</dbReference>
<dbReference type="Pfam" id="PF00583">
    <property type="entry name" value="Acetyltransf_1"/>
    <property type="match status" value="1"/>
</dbReference>
<dbReference type="SUPFAM" id="SSF55729">
    <property type="entry name" value="Acyl-CoA N-acyltransferases (Nat)"/>
    <property type="match status" value="1"/>
</dbReference>
<dbReference type="PROSITE" id="PS51186">
    <property type="entry name" value="GNAT"/>
    <property type="match status" value="1"/>
</dbReference>
<feature type="chain" id="PRO_0000066405" description="Uncharacterized N-acetyltransferase in pepI 3'region">
    <location>
        <begin position="1"/>
        <end position="173"/>
    </location>
</feature>
<feature type="domain" description="N-acetyltransferase" evidence="2">
    <location>
        <begin position="4"/>
        <end position="173"/>
    </location>
</feature>
<feature type="binding site" evidence="1">
    <location>
        <begin position="97"/>
        <end position="99"/>
    </location>
    <ligand>
        <name>acetyl-CoA</name>
        <dbReference type="ChEBI" id="CHEBI:57288"/>
    </ligand>
</feature>
<feature type="binding site" evidence="1">
    <location>
        <begin position="106"/>
        <end position="110"/>
    </location>
    <ligand>
        <name>acetyl-CoA</name>
        <dbReference type="ChEBI" id="CHEBI:57288"/>
    </ligand>
</feature>
<feature type="binding site" evidence="1">
    <location>
        <begin position="136"/>
        <end position="138"/>
    </location>
    <ligand>
        <name>acetyl-CoA</name>
        <dbReference type="ChEBI" id="CHEBI:57288"/>
    </ligand>
</feature>
<reference key="1">
    <citation type="journal article" date="1994" name="Microbiology">
        <title>Cloning, heterologous expression, and sequencing of a novel proline iminopeptidase gene, pepI, from Lactobacillus delbrueckii subsp. lactis DSM 7290.</title>
        <authorList>
            <person name="Klein J.R."/>
            <person name="Schmidt U."/>
            <person name="Plapp R."/>
        </authorList>
    </citation>
    <scope>NUCLEOTIDE SEQUENCE [GENOMIC DNA]</scope>
    <source>
        <strain>DSM 7290</strain>
    </source>
</reference>
<protein>
    <recommendedName>
        <fullName>Uncharacterized N-acetyltransferase in pepI 3'region</fullName>
        <ecNumber>2.3.1.-</ecNumber>
    </recommendedName>
</protein>